<reference key="1">
    <citation type="journal article" date="2001" name="Eur. J. Immunol.">
        <title>Molecular and genomic characterization of human DLEC, a novel member of the C-type lectin receptor gene family preferentially expressed on monocyte-derived dendritic cells.</title>
        <authorList>
            <person name="Arce I."/>
            <person name="Roda-Navarro P."/>
            <person name="Montoya M.C."/>
            <person name="Hernanz-Falcon P."/>
            <person name="Puig-Kroger A."/>
            <person name="Fernandez-Ruiz E."/>
        </authorList>
    </citation>
    <scope>NUCLEOTIDE SEQUENCE [MRNA] (ISOFORMS 1 AND 2)</scope>
    <scope>TISSUE SPECIFICITY</scope>
</reference>
<reference key="2">
    <citation type="journal article" date="2001" name="J. Exp. Med.">
        <title>BDCA-2, a novel plasmacytoid dendritic cell-specific type II C-type lectin, mediates antigen capture and is a potent inhibitor of interferon alpha/beta induction.</title>
        <authorList>
            <person name="Dzionek A."/>
            <person name="Sohma Y."/>
            <person name="Nagafune J."/>
            <person name="Cella M."/>
            <person name="Colonna M."/>
            <person name="Facchetti F."/>
            <person name="Gunther G."/>
            <person name="Johnston I."/>
            <person name="Lanzavecchia A."/>
            <person name="Nagasaka T."/>
            <person name="Okada T."/>
            <person name="Vermi W."/>
            <person name="Winkels G."/>
            <person name="Yamamoto T."/>
            <person name="Zysk M."/>
            <person name="Yamaguchi Y."/>
            <person name="Schmitz J."/>
        </authorList>
    </citation>
    <scope>NUCLEOTIDE SEQUENCE [MRNA] (ISOFORM 1)</scope>
    <scope>FUNCTION</scope>
    <scope>SUBCELLULAR LOCATION</scope>
    <scope>TISSUE SPECIFICITY</scope>
</reference>
<reference key="3">
    <citation type="journal article" date="2003" name="Genome Res.">
        <title>The secreted protein discovery initiative (SPDI), a large-scale effort to identify novel human secreted and transmembrane proteins: a bioinformatics assessment.</title>
        <authorList>
            <person name="Clark H.F."/>
            <person name="Gurney A.L."/>
            <person name="Abaya E."/>
            <person name="Baker K."/>
            <person name="Baldwin D.T."/>
            <person name="Brush J."/>
            <person name="Chen J."/>
            <person name="Chow B."/>
            <person name="Chui C."/>
            <person name="Crowley C."/>
            <person name="Currell B."/>
            <person name="Deuel B."/>
            <person name="Dowd P."/>
            <person name="Eaton D."/>
            <person name="Foster J.S."/>
            <person name="Grimaldi C."/>
            <person name="Gu Q."/>
            <person name="Hass P.E."/>
            <person name="Heldens S."/>
            <person name="Huang A."/>
            <person name="Kim H.S."/>
            <person name="Klimowski L."/>
            <person name="Jin Y."/>
            <person name="Johnson S."/>
            <person name="Lee J."/>
            <person name="Lewis L."/>
            <person name="Liao D."/>
            <person name="Mark M.R."/>
            <person name="Robbie E."/>
            <person name="Sanchez C."/>
            <person name="Schoenfeld J."/>
            <person name="Seshagiri S."/>
            <person name="Simmons L."/>
            <person name="Singh J."/>
            <person name="Smith V."/>
            <person name="Stinson J."/>
            <person name="Vagts A."/>
            <person name="Vandlen R.L."/>
            <person name="Watanabe C."/>
            <person name="Wieand D."/>
            <person name="Woods K."/>
            <person name="Xie M.-H."/>
            <person name="Yansura D.G."/>
            <person name="Yi S."/>
            <person name="Yu G."/>
            <person name="Yuan J."/>
            <person name="Zhang M."/>
            <person name="Zhang Z."/>
            <person name="Goddard A.D."/>
            <person name="Wood W.I."/>
            <person name="Godowski P.J."/>
            <person name="Gray A.M."/>
        </authorList>
    </citation>
    <scope>NUCLEOTIDE SEQUENCE [LARGE SCALE MRNA] (ISOFORM 1)</scope>
</reference>
<reference key="4">
    <citation type="submission" date="2005-09" db="EMBL/GenBank/DDBJ databases">
        <authorList>
            <person name="Mural R.J."/>
            <person name="Istrail S."/>
            <person name="Sutton G.G."/>
            <person name="Florea L."/>
            <person name="Halpern A.L."/>
            <person name="Mobarry C.M."/>
            <person name="Lippert R."/>
            <person name="Walenz B."/>
            <person name="Shatkay H."/>
            <person name="Dew I."/>
            <person name="Miller J.R."/>
            <person name="Flanigan M.J."/>
            <person name="Edwards N.J."/>
            <person name="Bolanos R."/>
            <person name="Fasulo D."/>
            <person name="Halldorsson B.V."/>
            <person name="Hannenhalli S."/>
            <person name="Turner R."/>
            <person name="Yooseph S."/>
            <person name="Lu F."/>
            <person name="Nusskern D.R."/>
            <person name="Shue B.C."/>
            <person name="Zheng X.H."/>
            <person name="Zhong F."/>
            <person name="Delcher A.L."/>
            <person name="Huson D.H."/>
            <person name="Kravitz S.A."/>
            <person name="Mouchard L."/>
            <person name="Reinert K."/>
            <person name="Remington K.A."/>
            <person name="Clark A.G."/>
            <person name="Waterman M.S."/>
            <person name="Eichler E.E."/>
            <person name="Adams M.D."/>
            <person name="Hunkapiller M.W."/>
            <person name="Myers E.W."/>
            <person name="Venter J.C."/>
        </authorList>
    </citation>
    <scope>NUCLEOTIDE SEQUENCE [LARGE SCALE GENOMIC DNA]</scope>
</reference>
<reference key="5">
    <citation type="journal article" date="2004" name="Genome Res.">
        <title>The status, quality, and expansion of the NIH full-length cDNA project: the Mammalian Gene Collection (MGC).</title>
        <authorList>
            <consortium name="The MGC Project Team"/>
        </authorList>
    </citation>
    <scope>NUCLEOTIDE SEQUENCE [LARGE SCALE MRNA] (ISOFORM 1)</scope>
</reference>
<reference key="6">
    <citation type="journal article" date="2000" name="Genomics">
        <title>Identification and characterization of the gene for a novel C-type lectin (CLECSF7) that maps near the natural killer gene complex on human chromosome 12.</title>
        <authorList>
            <person name="Fernandes M.J."/>
            <person name="Iscove N.N."/>
            <person name="Gingras G."/>
            <person name="Calabretta B."/>
        </authorList>
    </citation>
    <scope>TISSUE SPECIFICITY</scope>
</reference>
<reference key="7">
    <citation type="journal article" date="2011" name="J. Biol. Chem.">
        <title>Human C-type lectin domain family 4, member C (CLEC4C/BDCA-2/CD303) is a receptor for asialo-galactosyl-oligosaccharides.</title>
        <authorList>
            <person name="Riboldi E."/>
            <person name="Daniele R."/>
            <person name="Parola C."/>
            <person name="Inforzato A."/>
            <person name="Arnold P.L."/>
            <person name="Bosisio D."/>
            <person name="Fremont D.H."/>
            <person name="Bastone A."/>
            <person name="Colonna M."/>
            <person name="Sozzani S."/>
        </authorList>
    </citation>
    <scope>FUNCTION</scope>
    <scope>SUBCELLULAR LOCATION</scope>
</reference>
<reference key="8">
    <citation type="journal article" date="2014" name="Proteins">
        <title>Crystal structures of carbohydrate recognition domain of blood dendritic cell antigen-2 (BDCA2) reveal a common domain-swapped dimer.</title>
        <authorList>
            <person name="Nagae M."/>
            <person name="Ikeda A."/>
            <person name="Kitago Y."/>
            <person name="Matsumoto N."/>
            <person name="Yamamoto K."/>
            <person name="Yamaguchi Y."/>
        </authorList>
    </citation>
    <scope>X-RAY CRYSTALLOGRAPHY (1.80 ANGSTROMS) OF 83-210</scope>
    <scope>SUBUNIT</scope>
    <scope>DISULFIDE BONDS</scope>
</reference>
<reference key="9">
    <citation type="journal article" date="2015" name="J. Biol. Chem.">
        <title>A novel mechanism for binding of galactose-terminated glycans by the C-type carbohydrate recognition domain in blood dendritic cell antigen 2.</title>
        <authorList>
            <person name="Jegouzo S.A."/>
            <person name="Feinberg H."/>
            <person name="Dungarwalla T."/>
            <person name="Drickamer K."/>
            <person name="Weis W.I."/>
            <person name="Taylor M.E."/>
        </authorList>
    </citation>
    <scope>X-RAY CRYSTALLOGRAPHY (1.65 ANGSTROMS) OF 67-213 IN COMPLEX WITH MONOSACCHARIDE; TRISACCHARIDE AND CALCIUM</scope>
    <scope>SUBUNIT</scope>
    <scope>DISULFIDE BONDS</scope>
    <scope>MUTAGENESIS OF ASN-184</scope>
</reference>
<keyword id="KW-0002">3D-structure</keyword>
<keyword id="KW-1064">Adaptive immunity</keyword>
<keyword id="KW-0025">Alternative splicing</keyword>
<keyword id="KW-0106">Calcium</keyword>
<keyword id="KW-1003">Cell membrane</keyword>
<keyword id="KW-1015">Disulfide bond</keyword>
<keyword id="KW-0325">Glycoprotein</keyword>
<keyword id="KW-0391">Immunity</keyword>
<keyword id="KW-0399">Innate immunity</keyword>
<keyword id="KW-0430">Lectin</keyword>
<keyword id="KW-0472">Membrane</keyword>
<keyword id="KW-0479">Metal-binding</keyword>
<keyword id="KW-1267">Proteomics identification</keyword>
<keyword id="KW-1185">Reference proteome</keyword>
<keyword id="KW-0735">Signal-anchor</keyword>
<keyword id="KW-0812">Transmembrane</keyword>
<keyword id="KW-1133">Transmembrane helix</keyword>
<accession>Q8WTT0</accession>
<accession>D3DUU3</accession>
<accession>Q3T1C3</accession>
<accession>Q6UXS8</accession>
<accession>Q8WXX8</accession>
<sequence>MVPEEEPQDREKGLWWFQLKVWSMAVVSILLLSVCFTVSSVVPHNFMYSKTVKRLSKLREYQQYHPSLTCVMEGKDIEDWSCCPTPWTSFQSSCYFISTGMQSWTKSQKNCSVMGADLVVINTREEQDFIIQNLKRNSSYFLGLSDPGGRRHWQWVDQTPYNENVTFWHSGEPNNLDERCAIINFRSSEEWGWNDIHCHVPQKSICKMKKIYI</sequence>
<comment type="function">
    <text evidence="5 6 8">Lectin-type cell surface receptor which may play a role in antigen capturing by dendritic cells (PubMed:11748283, PubMed:21880719, PubMed:25995448). Specifically recognizes non-sialylated galactose-terminated biantennary glycans containing the trisaccharide epitope Gal(beta1-3/4)GlcNAc(beta1-2)Man (PubMed:21880719, PubMed:25995448). Binds to serum IgG (PubMed:25995448). Efficiently targets ligand into antigen-processing and peptide-loading compartments for presentation to T-cells (PubMed:11748283). May mediate potent inhibition of induction of IFN-alpha/beta expression in plasmacytoid dendritic cells (PubMed:11748283, PubMed:21880719). May act as a signaling receptor that activates protein-tyrosine kinases and mobilizes intracellular calcium (PubMed:11748283).</text>
</comment>
<comment type="subunit">
    <text evidence="7 8">Homodimer.</text>
</comment>
<comment type="interaction">
    <interactant intactId="EBI-12913226">
        <id>Q8WTT0</id>
    </interactant>
    <interactant intactId="EBI-17766761">
        <id>Q8N7P3</id>
        <label>CLDN22</label>
    </interactant>
    <organismsDiffer>false</organismsDiffer>
    <experiments>3</experiments>
</comment>
<comment type="interaction">
    <interactant intactId="EBI-12913226">
        <id>Q8WTT0</id>
    </interactant>
    <interactant intactId="EBI-12007212">
        <id>Q86UP2-3</id>
        <label>KTN1</label>
    </interactant>
    <organismsDiffer>false</organismsDiffer>
    <experiments>3</experiments>
</comment>
<comment type="interaction">
    <interactant intactId="EBI-12913226">
        <id>Q8WTT0</id>
    </interactant>
    <interactant intactId="EBI-3932027">
        <id>P21145</id>
        <label>MAL</label>
    </interactant>
    <organismsDiffer>false</organismsDiffer>
    <experiments>4</experiments>
</comment>
<comment type="subcellular location">
    <subcellularLocation>
        <location evidence="5 6">Cell membrane</location>
        <topology evidence="10">Single-pass type II membrane protein</topology>
    </subcellularLocation>
</comment>
<comment type="alternative products">
    <event type="alternative splicing"/>
    <isoform>
        <id>Q8WTT0-1</id>
        <name>1</name>
        <sequence type="displayed"/>
    </isoform>
    <isoform>
        <id>Q8WTT0-2</id>
        <name>2</name>
        <sequence type="described" ref="VSP_012845"/>
    </isoform>
</comment>
<comment type="tissue specificity">
    <text evidence="3 4 5">Expressed in plasmacytoid dendritic cells (PDCs). Constitutively expressed in immature monocyte-derived dendritic cells (iMDDC) and is significantly down-regulated upon maturation with LPS but not with TNF-alpha.</text>
</comment>
<comment type="online information" name="Functional Glycomics Gateway - Glycan Binding">
    <link uri="http://www.functionalglycomics.org/glycomics/GBPServlet?&amp;operationType=view&amp;cbpId=cbp_hum_Ctlect_00133"/>
    <text>BDCA-2</text>
</comment>
<protein>
    <recommendedName>
        <fullName>C-type lectin domain family 4 member C</fullName>
    </recommendedName>
    <alternativeName>
        <fullName>Blood dendritic cell antigen 2</fullName>
        <shortName>BDCA-2</shortName>
    </alternativeName>
    <alternativeName>
        <fullName>C-type lectin superfamily member 7</fullName>
    </alternativeName>
    <alternativeName>
        <fullName>Dendritic lectin</fullName>
    </alternativeName>
    <cdAntigenName>CD303</cdAntigenName>
</protein>
<gene>
    <name type="primary">CLEC4C</name>
    <name type="synonym">BDCA2</name>
    <name type="synonym">CLECSF11</name>
    <name type="synonym">CLECSF7</name>
    <name type="synonym">DLEC</name>
    <name type="synonym">HECL</name>
    <name type="ORF">UNQ9361/PRO34150</name>
</gene>
<dbReference type="EMBL" id="AF325459">
    <property type="protein sequence ID" value="AAL37358.1"/>
    <property type="molecule type" value="mRNA"/>
</dbReference>
<dbReference type="EMBL" id="AF325460">
    <property type="protein sequence ID" value="AAL37359.1"/>
    <property type="molecule type" value="mRNA"/>
</dbReference>
<dbReference type="EMBL" id="AF293615">
    <property type="protein sequence ID" value="AAL37036.1"/>
    <property type="molecule type" value="mRNA"/>
</dbReference>
<dbReference type="EMBL" id="AY358223">
    <property type="protein sequence ID" value="AAQ88590.1"/>
    <property type="molecule type" value="mRNA"/>
</dbReference>
<dbReference type="EMBL" id="CH471116">
    <property type="protein sequence ID" value="EAW88655.1"/>
    <property type="molecule type" value="Genomic_DNA"/>
</dbReference>
<dbReference type="EMBL" id="CH471116">
    <property type="protein sequence ID" value="EAW88656.1"/>
    <property type="molecule type" value="Genomic_DNA"/>
</dbReference>
<dbReference type="EMBL" id="BC074967">
    <property type="protein sequence ID" value="AAH74967.1"/>
    <property type="molecule type" value="mRNA"/>
</dbReference>
<dbReference type="EMBL" id="BC074968">
    <property type="protein sequence ID" value="AAH74968.1"/>
    <property type="molecule type" value="mRNA"/>
</dbReference>
<dbReference type="EMBL" id="BC102015">
    <property type="protein sequence ID" value="AAI02016.1"/>
    <property type="molecule type" value="mRNA"/>
</dbReference>
<dbReference type="EMBL" id="BC102016">
    <property type="protein sequence ID" value="AAI02017.1"/>
    <property type="molecule type" value="mRNA"/>
</dbReference>
<dbReference type="EMBL" id="BC102017">
    <property type="protein sequence ID" value="AAI02018.1"/>
    <property type="molecule type" value="mRNA"/>
</dbReference>
<dbReference type="EMBL" id="BC114338">
    <property type="protein sequence ID" value="AAI14339.1"/>
    <property type="molecule type" value="mRNA"/>
</dbReference>
<dbReference type="CCDS" id="CCDS8583.1">
    <molecule id="Q8WTT0-1"/>
</dbReference>
<dbReference type="CCDS" id="CCDS8584.1">
    <molecule id="Q8WTT0-2"/>
</dbReference>
<dbReference type="RefSeq" id="NP_001358319.1">
    <molecule id="Q8WTT0-1"/>
    <property type="nucleotide sequence ID" value="NM_001371390.1"/>
</dbReference>
<dbReference type="RefSeq" id="NP_569708.1">
    <molecule id="Q8WTT0-1"/>
    <property type="nucleotide sequence ID" value="NM_130441.3"/>
</dbReference>
<dbReference type="RefSeq" id="NP_987099.1">
    <molecule id="Q8WTT0-2"/>
    <property type="nucleotide sequence ID" value="NM_203503.2"/>
</dbReference>
<dbReference type="RefSeq" id="XP_024304641.1">
    <molecule id="Q8WTT0-1"/>
    <property type="nucleotide sequence ID" value="XM_024448873.2"/>
</dbReference>
<dbReference type="RefSeq" id="XP_054227312.1">
    <molecule id="Q8WTT0-1"/>
    <property type="nucleotide sequence ID" value="XM_054371337.1"/>
</dbReference>
<dbReference type="RefSeq" id="XP_054227313.1">
    <molecule id="Q8WTT0-1"/>
    <property type="nucleotide sequence ID" value="XM_054371338.1"/>
</dbReference>
<dbReference type="RefSeq" id="XP_054227314.1">
    <molecule id="Q8WTT0-2"/>
    <property type="nucleotide sequence ID" value="XM_054371339.1"/>
</dbReference>
<dbReference type="PDB" id="3WBP">
    <property type="method" value="X-ray"/>
    <property type="resolution" value="1.80 A"/>
    <property type="chains" value="A/B=83-210"/>
</dbReference>
<dbReference type="PDB" id="3WBQ">
    <property type="method" value="X-ray"/>
    <property type="resolution" value="2.30 A"/>
    <property type="chains" value="A/B=83-210"/>
</dbReference>
<dbReference type="PDB" id="3WBR">
    <property type="method" value="X-ray"/>
    <property type="resolution" value="2.20 A"/>
    <property type="chains" value="A/B/C/D/E/F/G/H=83-210"/>
</dbReference>
<dbReference type="PDB" id="4ZES">
    <property type="method" value="X-ray"/>
    <property type="resolution" value="1.65 A"/>
    <property type="chains" value="A/B=67-213"/>
</dbReference>
<dbReference type="PDB" id="4ZET">
    <property type="method" value="X-ray"/>
    <property type="resolution" value="2.90 A"/>
    <property type="chains" value="A/B=67-213"/>
</dbReference>
<dbReference type="PDBsum" id="3WBP"/>
<dbReference type="PDBsum" id="3WBQ"/>
<dbReference type="PDBsum" id="3WBR"/>
<dbReference type="PDBsum" id="4ZES"/>
<dbReference type="PDBsum" id="4ZET"/>
<dbReference type="SMR" id="Q8WTT0"/>
<dbReference type="BioGRID" id="128012">
    <property type="interactions" value="27"/>
</dbReference>
<dbReference type="DIP" id="DIP-29513N"/>
<dbReference type="FunCoup" id="Q8WTT0">
    <property type="interactions" value="42"/>
</dbReference>
<dbReference type="IntAct" id="Q8WTT0">
    <property type="interactions" value="21"/>
</dbReference>
<dbReference type="STRING" id="9606.ENSP00000440428"/>
<dbReference type="BindingDB" id="Q8WTT0"/>
<dbReference type="ChEMBL" id="CHEMBL2176855"/>
<dbReference type="MEROPS" id="I63.002"/>
<dbReference type="UniLectin" id="Q8WTT0"/>
<dbReference type="GlyCosmos" id="Q8WTT0">
    <property type="glycosylation" value="3 sites, No reported glycans"/>
</dbReference>
<dbReference type="GlyGen" id="Q8WTT0">
    <property type="glycosylation" value="3 sites"/>
</dbReference>
<dbReference type="BioMuta" id="CLEC4C"/>
<dbReference type="DMDM" id="59797957"/>
<dbReference type="MassIVE" id="Q8WTT0"/>
<dbReference type="PaxDb" id="9606-ENSP00000440428"/>
<dbReference type="PeptideAtlas" id="Q8WTT0"/>
<dbReference type="ABCD" id="Q8WTT0">
    <property type="antibodies" value="50 sequenced antibodies"/>
</dbReference>
<dbReference type="Antibodypedia" id="22963">
    <property type="antibodies" value="255 antibodies from 32 providers"/>
</dbReference>
<dbReference type="DNASU" id="170482"/>
<dbReference type="Ensembl" id="ENST00000354629.9">
    <molecule id="Q8WTT0-2"/>
    <property type="protein sequence ID" value="ENSP00000346648.5"/>
    <property type="gene ID" value="ENSG00000198178.11"/>
</dbReference>
<dbReference type="Ensembl" id="ENST00000360345.8">
    <molecule id="Q8WTT0-1"/>
    <property type="protein sequence ID" value="ENSP00000353500.3"/>
    <property type="gene ID" value="ENSG00000198178.11"/>
</dbReference>
<dbReference type="Ensembl" id="ENST00000540085.5">
    <molecule id="Q8WTT0-2"/>
    <property type="protein sequence ID" value="ENSP00000445338.1"/>
    <property type="gene ID" value="ENSG00000198178.11"/>
</dbReference>
<dbReference type="Ensembl" id="ENST00000542353.5">
    <molecule id="Q8WTT0-1"/>
    <property type="protein sequence ID" value="ENSP00000440428.1"/>
    <property type="gene ID" value="ENSG00000198178.11"/>
</dbReference>
<dbReference type="GeneID" id="170482"/>
<dbReference type="KEGG" id="hsa:170482"/>
<dbReference type="MANE-Select" id="ENST00000360345.8">
    <property type="protein sequence ID" value="ENSP00000353500.3"/>
    <property type="RefSeq nucleotide sequence ID" value="NM_001371390.1"/>
    <property type="RefSeq protein sequence ID" value="NP_001358319.1"/>
</dbReference>
<dbReference type="UCSC" id="uc001qtg.2">
    <molecule id="Q8WTT0-1"/>
    <property type="organism name" value="human"/>
</dbReference>
<dbReference type="AGR" id="HGNC:13258"/>
<dbReference type="CTD" id="170482"/>
<dbReference type="DisGeNET" id="170482"/>
<dbReference type="GeneCards" id="CLEC4C"/>
<dbReference type="HGNC" id="HGNC:13258">
    <property type="gene designation" value="CLEC4C"/>
</dbReference>
<dbReference type="HPA" id="ENSG00000198178">
    <property type="expression patterns" value="Tissue enhanced (lymphoid)"/>
</dbReference>
<dbReference type="MIM" id="606677">
    <property type="type" value="gene"/>
</dbReference>
<dbReference type="neXtProt" id="NX_Q8WTT0"/>
<dbReference type="OpenTargets" id="ENSG00000198178"/>
<dbReference type="PharmGKB" id="PA26585"/>
<dbReference type="VEuPathDB" id="HostDB:ENSG00000198178"/>
<dbReference type="eggNOG" id="KOG4297">
    <property type="taxonomic scope" value="Eukaryota"/>
</dbReference>
<dbReference type="GeneTree" id="ENSGT00940000162867"/>
<dbReference type="InParanoid" id="Q8WTT0"/>
<dbReference type="OMA" id="QDRVSHN"/>
<dbReference type="OrthoDB" id="6133475at2759"/>
<dbReference type="PAN-GO" id="Q8WTT0">
    <property type="GO annotations" value="3 GO annotations based on evolutionary models"/>
</dbReference>
<dbReference type="PhylomeDB" id="Q8WTT0"/>
<dbReference type="TreeFam" id="TF333341"/>
<dbReference type="PathwayCommons" id="Q8WTT0"/>
<dbReference type="Reactome" id="R-HSA-5621480">
    <property type="pathway name" value="Dectin-2 family"/>
</dbReference>
<dbReference type="Reactome" id="R-HSA-6798695">
    <property type="pathway name" value="Neutrophil degranulation"/>
</dbReference>
<dbReference type="SignaLink" id="Q8WTT0"/>
<dbReference type="BioGRID-ORCS" id="170482">
    <property type="hits" value="6 hits in 1133 CRISPR screens"/>
</dbReference>
<dbReference type="ChiTaRS" id="CLEC4C">
    <property type="organism name" value="human"/>
</dbReference>
<dbReference type="EvolutionaryTrace" id="Q8WTT0"/>
<dbReference type="GenomeRNAi" id="170482"/>
<dbReference type="Pharos" id="Q8WTT0">
    <property type="development level" value="Tbio"/>
</dbReference>
<dbReference type="PRO" id="PR:Q8WTT0"/>
<dbReference type="Proteomes" id="UP000005640">
    <property type="component" value="Chromosome 12"/>
</dbReference>
<dbReference type="RNAct" id="Q8WTT0">
    <property type="molecule type" value="protein"/>
</dbReference>
<dbReference type="Bgee" id="ENSG00000198178">
    <property type="expression patterns" value="Expressed in secondary oocyte and 51 other cell types or tissues"/>
</dbReference>
<dbReference type="ExpressionAtlas" id="Q8WTT0">
    <property type="expression patterns" value="baseline and differential"/>
</dbReference>
<dbReference type="GO" id="GO:0009897">
    <property type="term" value="C:external side of plasma membrane"/>
    <property type="evidence" value="ECO:0000318"/>
    <property type="project" value="GO_Central"/>
</dbReference>
<dbReference type="GO" id="GO:0101003">
    <property type="term" value="C:ficolin-1-rich granule membrane"/>
    <property type="evidence" value="ECO:0000304"/>
    <property type="project" value="Reactome"/>
</dbReference>
<dbReference type="GO" id="GO:0005886">
    <property type="term" value="C:plasma membrane"/>
    <property type="evidence" value="ECO:0000304"/>
    <property type="project" value="Reactome"/>
</dbReference>
<dbReference type="GO" id="GO:0030667">
    <property type="term" value="C:secretory granule membrane"/>
    <property type="evidence" value="ECO:0000304"/>
    <property type="project" value="Reactome"/>
</dbReference>
<dbReference type="GO" id="GO:0070821">
    <property type="term" value="C:tertiary granule membrane"/>
    <property type="evidence" value="ECO:0000304"/>
    <property type="project" value="Reactome"/>
</dbReference>
<dbReference type="GO" id="GO:0030246">
    <property type="term" value="F:carbohydrate binding"/>
    <property type="evidence" value="ECO:0000318"/>
    <property type="project" value="GO_Central"/>
</dbReference>
<dbReference type="GO" id="GO:0046872">
    <property type="term" value="F:metal ion binding"/>
    <property type="evidence" value="ECO:0007669"/>
    <property type="project" value="UniProtKB-KW"/>
</dbReference>
<dbReference type="GO" id="GO:0038187">
    <property type="term" value="F:pattern recognition receptor activity"/>
    <property type="evidence" value="ECO:0000318"/>
    <property type="project" value="GO_Central"/>
</dbReference>
<dbReference type="GO" id="GO:0002250">
    <property type="term" value="P:adaptive immune response"/>
    <property type="evidence" value="ECO:0007669"/>
    <property type="project" value="UniProtKB-KW"/>
</dbReference>
<dbReference type="GO" id="GO:0061760">
    <property type="term" value="P:antifungal innate immune response"/>
    <property type="evidence" value="ECO:0000318"/>
    <property type="project" value="GO_Central"/>
</dbReference>
<dbReference type="CDD" id="cd03590">
    <property type="entry name" value="CLECT_DC-SIGN_like"/>
    <property type="match status" value="1"/>
</dbReference>
<dbReference type="FunFam" id="3.10.100.10:FF:000024">
    <property type="entry name" value="C-type lectin domain family 4 member A"/>
    <property type="match status" value="1"/>
</dbReference>
<dbReference type="Gene3D" id="3.10.100.10">
    <property type="entry name" value="Mannose-Binding Protein A, subunit A"/>
    <property type="match status" value="1"/>
</dbReference>
<dbReference type="InterPro" id="IPR001304">
    <property type="entry name" value="C-type_lectin-like"/>
</dbReference>
<dbReference type="InterPro" id="IPR016186">
    <property type="entry name" value="C-type_lectin-like/link_sf"/>
</dbReference>
<dbReference type="InterPro" id="IPR050111">
    <property type="entry name" value="C-type_lectin/snaclec_domain"/>
</dbReference>
<dbReference type="InterPro" id="IPR018378">
    <property type="entry name" value="C-type_lectin_CS"/>
</dbReference>
<dbReference type="InterPro" id="IPR033989">
    <property type="entry name" value="CD209-like_CTLD"/>
</dbReference>
<dbReference type="InterPro" id="IPR016187">
    <property type="entry name" value="CTDL_fold"/>
</dbReference>
<dbReference type="PANTHER" id="PTHR22803">
    <property type="entry name" value="MANNOSE, PHOSPHOLIPASE, LECTIN RECEPTOR RELATED"/>
    <property type="match status" value="1"/>
</dbReference>
<dbReference type="Pfam" id="PF00059">
    <property type="entry name" value="Lectin_C"/>
    <property type="match status" value="1"/>
</dbReference>
<dbReference type="SMART" id="SM00034">
    <property type="entry name" value="CLECT"/>
    <property type="match status" value="1"/>
</dbReference>
<dbReference type="SUPFAM" id="SSF56436">
    <property type="entry name" value="C-type lectin-like"/>
    <property type="match status" value="1"/>
</dbReference>
<dbReference type="PROSITE" id="PS00615">
    <property type="entry name" value="C_TYPE_LECTIN_1"/>
    <property type="match status" value="1"/>
</dbReference>
<dbReference type="PROSITE" id="PS50041">
    <property type="entry name" value="C_TYPE_LECTIN_2"/>
    <property type="match status" value="1"/>
</dbReference>
<feature type="chain" id="PRO_0000046615" description="C-type lectin domain family 4 member C">
    <location>
        <begin position="1"/>
        <end position="213"/>
    </location>
</feature>
<feature type="topological domain" description="Cytoplasmic" evidence="1">
    <location>
        <begin position="1"/>
        <end position="21"/>
    </location>
</feature>
<feature type="transmembrane region" description="Helical; Signal-anchor for type II membrane protein" evidence="1">
    <location>
        <begin position="22"/>
        <end position="44"/>
    </location>
</feature>
<feature type="topological domain" description="Extracellular" evidence="1">
    <location>
        <begin position="45"/>
        <end position="213"/>
    </location>
</feature>
<feature type="domain" description="C-type lectin" evidence="2">
    <location>
        <begin position="90"/>
        <end position="207"/>
    </location>
</feature>
<feature type="binding site" evidence="8 15">
    <location>
        <position position="139"/>
    </location>
    <ligand>
        <name>a carbohydrate</name>
        <dbReference type="ChEBI" id="CHEBI:16646"/>
    </ligand>
</feature>
<feature type="binding site" evidence="8 14 15">
    <location>
        <position position="172"/>
    </location>
    <ligand>
        <name>Ca(2+)</name>
        <dbReference type="ChEBI" id="CHEBI:29108"/>
    </ligand>
</feature>
<feature type="binding site" evidence="8 14 15">
    <location>
        <position position="174"/>
    </location>
    <ligand>
        <name>Ca(2+)</name>
        <dbReference type="ChEBI" id="CHEBI:29108"/>
    </ligand>
</feature>
<feature type="binding site" evidence="8 15">
    <location>
        <position position="178"/>
    </location>
    <ligand>
        <name>a carbohydrate</name>
        <dbReference type="ChEBI" id="CHEBI:16646"/>
    </ligand>
</feature>
<feature type="binding site" evidence="8 14 15">
    <location>
        <position position="178"/>
    </location>
    <ligand>
        <name>Ca(2+)</name>
        <dbReference type="ChEBI" id="CHEBI:29108"/>
    </ligand>
</feature>
<feature type="binding site" evidence="8 15">
    <location>
        <begin position="184"/>
        <end position="186"/>
    </location>
    <ligand>
        <name>a carbohydrate</name>
        <dbReference type="ChEBI" id="CHEBI:16646"/>
    </ligand>
</feature>
<feature type="binding site" evidence="8 15">
    <location>
        <begin position="194"/>
        <end position="195"/>
    </location>
    <ligand>
        <name>a carbohydrate</name>
        <dbReference type="ChEBI" id="CHEBI:16646"/>
    </ligand>
</feature>
<feature type="binding site" evidence="8 15">
    <location>
        <position position="194"/>
    </location>
    <ligand>
        <name>a carbohydrate</name>
        <dbReference type="ChEBI" id="CHEBI:16646"/>
    </ligand>
</feature>
<feature type="binding site" evidence="8 14 15">
    <location>
        <position position="194"/>
    </location>
    <ligand>
        <name>Ca(2+)</name>
        <dbReference type="ChEBI" id="CHEBI:29108"/>
    </ligand>
</feature>
<feature type="binding site" evidence="8 14 15">
    <location>
        <position position="195"/>
    </location>
    <ligand>
        <name>Ca(2+)</name>
        <dbReference type="ChEBI" id="CHEBI:29108"/>
    </ligand>
</feature>
<feature type="binding site" evidence="8 15">
    <location>
        <position position="202"/>
    </location>
    <ligand>
        <name>a carbohydrate</name>
        <dbReference type="ChEBI" id="CHEBI:16646"/>
    </ligand>
</feature>
<feature type="glycosylation site" description="N-linked (GlcNAc...) asparagine" evidence="1">
    <location>
        <position position="110"/>
    </location>
</feature>
<feature type="glycosylation site" description="N-linked (GlcNAc...) asparagine" evidence="1">
    <location>
        <position position="137"/>
    </location>
</feature>
<feature type="glycosylation site" description="N-linked (GlcNAc...) asparagine" evidence="1">
    <location>
        <position position="164"/>
    </location>
</feature>
<feature type="disulfide bond" evidence="8 14 15">
    <location>
        <begin position="70"/>
        <end position="82"/>
    </location>
</feature>
<feature type="disulfide bond" evidence="2 7 8 11 12 13 14 15">
    <location>
        <begin position="83"/>
        <end position="94"/>
    </location>
</feature>
<feature type="disulfide bond" evidence="2 7 8 11 12 13 14 15">
    <location>
        <begin position="111"/>
        <end position="206"/>
    </location>
</feature>
<feature type="disulfide bond" evidence="2 7 8 11 12 13 14 15">
    <location>
        <begin position="180"/>
        <end position="198"/>
    </location>
</feature>
<feature type="splice variant" id="VSP_012845" description="In isoform 2." evidence="9">
    <location>
        <begin position="11"/>
        <end position="41"/>
    </location>
</feature>
<feature type="mutagenesis site" description="Significantly impairs carbohydrate binding for the trisaccharide Gal(beta1-3/4)GlcNAc(beta1-2)Man." evidence="8">
    <original>S</original>
    <variation>A</variation>
    <location>
        <position position="139"/>
    </location>
</feature>
<feature type="mutagenesis site" description="Abolishes carbohydrate binding for the trisaccharide Gal(beta1-3/4)GlcNAc(beta1-2)Man." evidence="8">
    <original>N</original>
    <variation>A</variation>
    <location>
        <position position="184"/>
    </location>
</feature>
<feature type="mutagenesis site" description="Significantly impairs carbohydrate binding for the trisaccharide Gal(beta1-3/4)GlcNAc(beta1-2)Man." evidence="8">
    <original>R</original>
    <variation>A</variation>
    <location>
        <position position="186"/>
    </location>
</feature>
<feature type="mutagenesis site" description="Significantly impairs carbohydrate binding for the trisaccharide Gal(beta1-3/4)GlcNAc(beta1-2)Man." evidence="8">
    <original>V</original>
    <variation>A</variation>
    <location>
        <position position="200"/>
    </location>
</feature>
<feature type="mutagenesis site" description="Significantly impairs carbohydrate binding for the trisaccharide Gal(beta1-3/4)GlcNAc(beta1-2)Man." evidence="8">
    <original>Q</original>
    <variation>A</variation>
    <location>
        <position position="202"/>
    </location>
</feature>
<feature type="sequence conflict" description="In Ref. 3; AAQ88590." evidence="10" ref="3">
    <original>P</original>
    <variation>S</variation>
    <location>
        <position position="66"/>
    </location>
</feature>
<feature type="strand" evidence="17">
    <location>
        <begin position="68"/>
        <end position="73"/>
    </location>
</feature>
<feature type="strand" evidence="17">
    <location>
        <begin position="80"/>
        <end position="84"/>
    </location>
</feature>
<feature type="strand" evidence="17">
    <location>
        <begin position="87"/>
        <end position="90"/>
    </location>
</feature>
<feature type="strand" evidence="17">
    <location>
        <begin position="93"/>
        <end position="102"/>
    </location>
</feature>
<feature type="helix" evidence="17">
    <location>
        <begin position="104"/>
        <end position="113"/>
    </location>
</feature>
<feature type="helix" evidence="17">
    <location>
        <begin position="124"/>
        <end position="130"/>
    </location>
</feature>
<feature type="helix" evidence="17">
    <location>
        <begin position="131"/>
        <end position="133"/>
    </location>
</feature>
<feature type="strand" evidence="17">
    <location>
        <begin position="140"/>
        <end position="145"/>
    </location>
</feature>
<feature type="strand" evidence="17">
    <location>
        <begin position="149"/>
        <end position="151"/>
    </location>
</feature>
<feature type="strand" evidence="16">
    <location>
        <begin position="154"/>
        <end position="157"/>
    </location>
</feature>
<feature type="helix" evidence="17">
    <location>
        <begin position="163"/>
        <end position="165"/>
    </location>
</feature>
<feature type="strand" evidence="17">
    <location>
        <begin position="180"/>
        <end position="186"/>
    </location>
</feature>
<feature type="turn" evidence="17">
    <location>
        <begin position="187"/>
        <end position="189"/>
    </location>
</feature>
<feature type="strand" evidence="17">
    <location>
        <begin position="190"/>
        <end position="196"/>
    </location>
</feature>
<feature type="strand" evidence="17">
    <location>
        <begin position="202"/>
        <end position="209"/>
    </location>
</feature>
<feature type="strand" evidence="17">
    <location>
        <begin position="211"/>
        <end position="213"/>
    </location>
</feature>
<name>CLC4C_HUMAN</name>
<proteinExistence type="evidence at protein level"/>
<organism>
    <name type="scientific">Homo sapiens</name>
    <name type="common">Human</name>
    <dbReference type="NCBI Taxonomy" id="9606"/>
    <lineage>
        <taxon>Eukaryota</taxon>
        <taxon>Metazoa</taxon>
        <taxon>Chordata</taxon>
        <taxon>Craniata</taxon>
        <taxon>Vertebrata</taxon>
        <taxon>Euteleostomi</taxon>
        <taxon>Mammalia</taxon>
        <taxon>Eutheria</taxon>
        <taxon>Euarchontoglires</taxon>
        <taxon>Primates</taxon>
        <taxon>Haplorrhini</taxon>
        <taxon>Catarrhini</taxon>
        <taxon>Hominidae</taxon>
        <taxon>Homo</taxon>
    </lineage>
</organism>
<evidence type="ECO:0000255" key="1"/>
<evidence type="ECO:0000255" key="2">
    <source>
        <dbReference type="PROSITE-ProRule" id="PRU00040"/>
    </source>
</evidence>
<evidence type="ECO:0000269" key="3">
    <source>
    </source>
</evidence>
<evidence type="ECO:0000269" key="4">
    <source>
    </source>
</evidence>
<evidence type="ECO:0000269" key="5">
    <source>
    </source>
</evidence>
<evidence type="ECO:0000269" key="6">
    <source>
    </source>
</evidence>
<evidence type="ECO:0000269" key="7">
    <source>
    </source>
</evidence>
<evidence type="ECO:0000269" key="8">
    <source>
    </source>
</evidence>
<evidence type="ECO:0000303" key="9">
    <source>
    </source>
</evidence>
<evidence type="ECO:0000305" key="10"/>
<evidence type="ECO:0007744" key="11">
    <source>
        <dbReference type="PDB" id="3WBP"/>
    </source>
</evidence>
<evidence type="ECO:0007744" key="12">
    <source>
        <dbReference type="PDB" id="3WBQ"/>
    </source>
</evidence>
<evidence type="ECO:0007744" key="13">
    <source>
        <dbReference type="PDB" id="3WBR"/>
    </source>
</evidence>
<evidence type="ECO:0007744" key="14">
    <source>
        <dbReference type="PDB" id="4ZES"/>
    </source>
</evidence>
<evidence type="ECO:0007744" key="15">
    <source>
        <dbReference type="PDB" id="4ZET"/>
    </source>
</evidence>
<evidence type="ECO:0007829" key="16">
    <source>
        <dbReference type="PDB" id="3WBQ"/>
    </source>
</evidence>
<evidence type="ECO:0007829" key="17">
    <source>
        <dbReference type="PDB" id="4ZES"/>
    </source>
</evidence>